<proteinExistence type="inferred from homology"/>
<dbReference type="EC" id="3.4.21.-"/>
<dbReference type="EC" id="3.4.22.45" evidence="2"/>
<dbReference type="EC" id="3.6.4.-"/>
<dbReference type="EC" id="3.4.22.44"/>
<dbReference type="EC" id="2.7.7.48"/>
<dbReference type="EMBL" id="AY192568">
    <property type="protein sequence ID" value="AAP30002.1"/>
    <property type="molecule type" value="Genomic_RNA"/>
</dbReference>
<dbReference type="EMBL" id="D00490">
    <property type="protein sequence ID" value="BAA00378.1"/>
    <property type="molecule type" value="Genomic_RNA"/>
</dbReference>
<dbReference type="PIR" id="JU0115">
    <property type="entry name" value="JU0115"/>
</dbReference>
<dbReference type="MEROPS" id="C04.008"/>
<dbReference type="MEROPS" id="C06.001"/>
<dbReference type="MEROPS" id="S30.002"/>
<dbReference type="Proteomes" id="UP000007620">
    <property type="component" value="Genome"/>
</dbReference>
<dbReference type="GO" id="GO:0019029">
    <property type="term" value="C:helical viral capsid"/>
    <property type="evidence" value="ECO:0007669"/>
    <property type="project" value="UniProtKB-KW"/>
</dbReference>
<dbReference type="GO" id="GO:0044161">
    <property type="term" value="C:host cell cytoplasmic vesicle"/>
    <property type="evidence" value="ECO:0007669"/>
    <property type="project" value="UniProtKB-SubCell"/>
</dbReference>
<dbReference type="GO" id="GO:0042025">
    <property type="term" value="C:host cell nucleus"/>
    <property type="evidence" value="ECO:0007669"/>
    <property type="project" value="UniProtKB-SubCell"/>
</dbReference>
<dbReference type="GO" id="GO:0005524">
    <property type="term" value="F:ATP binding"/>
    <property type="evidence" value="ECO:0007669"/>
    <property type="project" value="UniProtKB-KW"/>
</dbReference>
<dbReference type="GO" id="GO:0004197">
    <property type="term" value="F:cysteine-type endopeptidase activity"/>
    <property type="evidence" value="ECO:0007669"/>
    <property type="project" value="InterPro"/>
</dbReference>
<dbReference type="GO" id="GO:0004386">
    <property type="term" value="F:helicase activity"/>
    <property type="evidence" value="ECO:0007669"/>
    <property type="project" value="UniProtKB-KW"/>
</dbReference>
<dbReference type="GO" id="GO:0016818">
    <property type="term" value="F:hydrolase activity, acting on acid anhydrides, in phosphorus-containing anhydrides"/>
    <property type="evidence" value="ECO:0007669"/>
    <property type="project" value="InterPro"/>
</dbReference>
<dbReference type="GO" id="GO:0003723">
    <property type="term" value="F:RNA binding"/>
    <property type="evidence" value="ECO:0007669"/>
    <property type="project" value="InterPro"/>
</dbReference>
<dbReference type="GO" id="GO:0003968">
    <property type="term" value="F:RNA-directed RNA polymerase activity"/>
    <property type="evidence" value="ECO:0007669"/>
    <property type="project" value="UniProtKB-KW"/>
</dbReference>
<dbReference type="GO" id="GO:0008236">
    <property type="term" value="F:serine-type peptidase activity"/>
    <property type="evidence" value="ECO:0007669"/>
    <property type="project" value="UniProtKB-KW"/>
</dbReference>
<dbReference type="GO" id="GO:0005198">
    <property type="term" value="F:structural molecule activity"/>
    <property type="evidence" value="ECO:0007669"/>
    <property type="project" value="InterPro"/>
</dbReference>
<dbReference type="GO" id="GO:0006351">
    <property type="term" value="P:DNA-templated transcription"/>
    <property type="evidence" value="ECO:0007669"/>
    <property type="project" value="InterPro"/>
</dbReference>
<dbReference type="GO" id="GO:0006508">
    <property type="term" value="P:proteolysis"/>
    <property type="evidence" value="ECO:0007669"/>
    <property type="project" value="UniProtKB-KW"/>
</dbReference>
<dbReference type="GO" id="GO:0052170">
    <property type="term" value="P:symbiont-mediated suppression of host innate immune response"/>
    <property type="evidence" value="ECO:0007669"/>
    <property type="project" value="UniProtKB-KW"/>
</dbReference>
<dbReference type="GO" id="GO:0039694">
    <property type="term" value="P:viral RNA genome replication"/>
    <property type="evidence" value="ECO:0007669"/>
    <property type="project" value="InterPro"/>
</dbReference>
<dbReference type="GO" id="GO:0075523">
    <property type="term" value="P:viral translational frameshifting"/>
    <property type="evidence" value="ECO:0007669"/>
    <property type="project" value="UniProtKB-KW"/>
</dbReference>
<dbReference type="CDD" id="cd23175">
    <property type="entry name" value="ps-ssRNAv_Potyviridae_RdRp"/>
    <property type="match status" value="1"/>
</dbReference>
<dbReference type="Gene3D" id="3.30.70.270">
    <property type="match status" value="1"/>
</dbReference>
<dbReference type="Gene3D" id="3.90.70.150">
    <property type="entry name" value="Helper component proteinase"/>
    <property type="match status" value="1"/>
</dbReference>
<dbReference type="Gene3D" id="3.40.50.300">
    <property type="entry name" value="P-loop containing nucleotide triphosphate hydrolases"/>
    <property type="match status" value="2"/>
</dbReference>
<dbReference type="Gene3D" id="2.40.10.10">
    <property type="entry name" value="Trypsin-like serine proteases"/>
    <property type="match status" value="2"/>
</dbReference>
<dbReference type="InterPro" id="IPR011545">
    <property type="entry name" value="DEAD/DEAH_box_helicase_dom"/>
</dbReference>
<dbReference type="InterPro" id="IPR043502">
    <property type="entry name" value="DNA/RNA_pol_sf"/>
</dbReference>
<dbReference type="InterPro" id="IPR001456">
    <property type="entry name" value="HC-pro"/>
</dbReference>
<dbReference type="InterPro" id="IPR031159">
    <property type="entry name" value="HC_PRO_CPD_dom"/>
</dbReference>
<dbReference type="InterPro" id="IPR042308">
    <property type="entry name" value="HC_PRO_CPD_sf"/>
</dbReference>
<dbReference type="InterPro" id="IPR014001">
    <property type="entry name" value="Helicase_ATP-bd"/>
</dbReference>
<dbReference type="InterPro" id="IPR001650">
    <property type="entry name" value="Helicase_C-like"/>
</dbReference>
<dbReference type="InterPro" id="IPR027417">
    <property type="entry name" value="P-loop_NTPase"/>
</dbReference>
<dbReference type="InterPro" id="IPR002540">
    <property type="entry name" value="Pept_S30_P1_potyvir"/>
</dbReference>
<dbReference type="InterPro" id="IPR009003">
    <property type="entry name" value="Peptidase_S1_PA"/>
</dbReference>
<dbReference type="InterPro" id="IPR043504">
    <property type="entry name" value="Peptidase_S1_PA_chymotrypsin"/>
</dbReference>
<dbReference type="InterPro" id="IPR001592">
    <property type="entry name" value="Poty_coat"/>
</dbReference>
<dbReference type="InterPro" id="IPR001730">
    <property type="entry name" value="Potyv_NIa-pro_dom"/>
</dbReference>
<dbReference type="InterPro" id="IPR039560">
    <property type="entry name" value="Potyvirid-P3"/>
</dbReference>
<dbReference type="InterPro" id="IPR013648">
    <property type="entry name" value="PP_Potyviridae"/>
</dbReference>
<dbReference type="InterPro" id="IPR043128">
    <property type="entry name" value="Rev_trsase/Diguanyl_cyclase"/>
</dbReference>
<dbReference type="InterPro" id="IPR001205">
    <property type="entry name" value="RNA-dir_pol_C"/>
</dbReference>
<dbReference type="InterPro" id="IPR007094">
    <property type="entry name" value="RNA-dir_pol_PSvirus"/>
</dbReference>
<dbReference type="PANTHER" id="PTHR18934">
    <property type="entry name" value="ATP-DEPENDENT RNA HELICASE"/>
    <property type="match status" value="1"/>
</dbReference>
<dbReference type="PANTHER" id="PTHR18934:SF91">
    <property type="entry name" value="PRE-MRNA-SPLICING FACTOR ATP-DEPENDENT RNA HELICASE PRP16"/>
    <property type="match status" value="1"/>
</dbReference>
<dbReference type="Pfam" id="PF00270">
    <property type="entry name" value="DEAD"/>
    <property type="match status" value="1"/>
</dbReference>
<dbReference type="Pfam" id="PF00271">
    <property type="entry name" value="Helicase_C"/>
    <property type="match status" value="1"/>
</dbReference>
<dbReference type="Pfam" id="PF00863">
    <property type="entry name" value="Peptidase_C4"/>
    <property type="match status" value="1"/>
</dbReference>
<dbReference type="Pfam" id="PF00851">
    <property type="entry name" value="Peptidase_C6"/>
    <property type="match status" value="1"/>
</dbReference>
<dbReference type="Pfam" id="PF01577">
    <property type="entry name" value="Peptidase_S30"/>
    <property type="match status" value="1"/>
</dbReference>
<dbReference type="Pfam" id="PF00767">
    <property type="entry name" value="Poty_coat"/>
    <property type="match status" value="1"/>
</dbReference>
<dbReference type="Pfam" id="PF08440">
    <property type="entry name" value="Poty_PP"/>
    <property type="match status" value="1"/>
</dbReference>
<dbReference type="Pfam" id="PF13608">
    <property type="entry name" value="Potyvirid-P3"/>
    <property type="match status" value="1"/>
</dbReference>
<dbReference type="Pfam" id="PF00680">
    <property type="entry name" value="RdRP_1"/>
    <property type="match status" value="1"/>
</dbReference>
<dbReference type="PRINTS" id="PR00966">
    <property type="entry name" value="NIAPOTYPTASE"/>
</dbReference>
<dbReference type="SMART" id="SM00487">
    <property type="entry name" value="DEXDc"/>
    <property type="match status" value="1"/>
</dbReference>
<dbReference type="SMART" id="SM00490">
    <property type="entry name" value="HELICc"/>
    <property type="match status" value="1"/>
</dbReference>
<dbReference type="SUPFAM" id="SSF56672">
    <property type="entry name" value="DNA/RNA polymerases"/>
    <property type="match status" value="1"/>
</dbReference>
<dbReference type="SUPFAM" id="SSF52540">
    <property type="entry name" value="P-loop containing nucleoside triphosphate hydrolases"/>
    <property type="match status" value="2"/>
</dbReference>
<dbReference type="SUPFAM" id="SSF50494">
    <property type="entry name" value="Trypsin-like serine proteases"/>
    <property type="match status" value="1"/>
</dbReference>
<dbReference type="PROSITE" id="PS51744">
    <property type="entry name" value="HC_PRO_CPD"/>
    <property type="match status" value="1"/>
</dbReference>
<dbReference type="PROSITE" id="PS51192">
    <property type="entry name" value="HELICASE_ATP_BIND_1"/>
    <property type="match status" value="1"/>
</dbReference>
<dbReference type="PROSITE" id="PS51194">
    <property type="entry name" value="HELICASE_CTER"/>
    <property type="match status" value="1"/>
</dbReference>
<dbReference type="PROSITE" id="PS51436">
    <property type="entry name" value="POTYVIRUS_NIA_PRO"/>
    <property type="match status" value="1"/>
</dbReference>
<dbReference type="PROSITE" id="PS51871">
    <property type="entry name" value="PV_P1_PRO"/>
    <property type="match status" value="1"/>
</dbReference>
<dbReference type="PROSITE" id="PS50507">
    <property type="entry name" value="RDRP_SSRNA_POS"/>
    <property type="match status" value="1"/>
</dbReference>
<protein>
    <recommendedName>
        <fullName>Genome polyprotein</fullName>
    </recommendedName>
    <component>
        <recommendedName>
            <fullName>P1 protease</fullName>
            <ecNumber>3.4.21.-</ecNumber>
        </recommendedName>
        <alternativeName>
            <fullName>Leader protease P1</fullName>
        </alternativeName>
        <alternativeName>
            <fullName>N-terminal protein</fullName>
        </alternativeName>
        <alternativeName>
            <fullName>P1 proteinase</fullName>
        </alternativeName>
    </component>
    <component>
        <recommendedName>
            <fullName>Helper component proteinase</fullName>
            <shortName>HC-pro</shortName>
            <ecNumber evidence="2">3.4.22.45</ecNumber>
        </recommendedName>
    </component>
    <component>
        <recommendedName>
            <fullName>Protein P3</fullName>
        </recommendedName>
    </component>
    <component>
        <recommendedName>
            <fullName>6 kDa protein 1</fullName>
            <shortName>6K1</shortName>
        </recommendedName>
    </component>
    <component>
        <recommendedName>
            <fullName>Cytoplasmic inclusion protein</fullName>
            <shortName>CI</shortName>
            <ecNumber>3.6.4.-</ecNumber>
        </recommendedName>
    </component>
    <component>
        <recommendedName>
            <fullName>6 kDa protein 2</fullName>
            <shortName>6K2</shortName>
        </recommendedName>
    </component>
    <component>
        <recommendedName>
            <fullName>Viral genome-linked protein</fullName>
        </recommendedName>
        <alternativeName>
            <fullName>VPg</fullName>
        </alternativeName>
    </component>
    <component>
        <recommendedName>
            <fullName>Nuclear inclusion protein A</fullName>
            <shortName>NI-a</shortName>
            <shortName>NIa</shortName>
            <ecNumber>3.4.22.44</ecNumber>
        </recommendedName>
        <alternativeName>
            <fullName>49 kDa proteinase</fullName>
            <shortName>49 kDa-Pro</shortName>
        </alternativeName>
        <alternativeName>
            <fullName>NIa-pro</fullName>
        </alternativeName>
    </component>
    <component>
        <recommendedName>
            <fullName>Nuclear inclusion protein B</fullName>
            <shortName>NI-b</shortName>
            <shortName>NIb</shortName>
            <ecNumber>2.7.7.48</ecNumber>
        </recommendedName>
        <alternativeName>
            <fullName>RNA-directed RNA polymerase</fullName>
        </alternativeName>
    </component>
    <component>
        <recommendedName>
            <fullName>Capsid protein</fullName>
            <shortName>CP</shortName>
        </recommendedName>
        <alternativeName>
            <fullName>Coat protein</fullName>
        </alternativeName>
    </component>
</protein>
<keyword id="KW-0067">ATP-binding</keyword>
<keyword id="KW-0167">Capsid protein</keyword>
<keyword id="KW-0191">Covalent protein-RNA linkage</keyword>
<keyword id="KW-1139">Helical capsid protein</keyword>
<keyword id="KW-0347">Helicase</keyword>
<keyword id="KW-1036">Host cytoplasmic vesicle</keyword>
<keyword id="KW-1048">Host nucleus</keyword>
<keyword id="KW-0945">Host-virus interaction</keyword>
<keyword id="KW-0378">Hydrolase</keyword>
<keyword id="KW-1090">Inhibition of host innate immune response by virus</keyword>
<keyword id="KW-0547">Nucleotide-binding</keyword>
<keyword id="KW-0548">Nucleotidyltransferase</keyword>
<keyword id="KW-0597">Phosphoprotein</keyword>
<keyword id="KW-0645">Protease</keyword>
<keyword id="KW-0688">Ribosomal frameshifting</keyword>
<keyword id="KW-0696">RNA-directed RNA polymerase</keyword>
<keyword id="KW-0720">Serine protease</keyword>
<keyword id="KW-0941">Suppressor of RNA silencing</keyword>
<keyword id="KW-0788">Thiol protease</keyword>
<keyword id="KW-0808">Transferase</keyword>
<keyword id="KW-0899">Viral immunoevasion</keyword>
<keyword id="KW-0693">Viral RNA replication</keyword>
<keyword id="KW-0946">Virion</keyword>
<evidence type="ECO:0000250" key="1"/>
<evidence type="ECO:0000250" key="2">
    <source>
        <dbReference type="UniProtKB" id="P04517"/>
    </source>
</evidence>
<evidence type="ECO:0000250" key="3">
    <source>
        <dbReference type="UniProtKB" id="P09814"/>
    </source>
</evidence>
<evidence type="ECO:0000250" key="4">
    <source>
        <dbReference type="UniProtKB" id="P13529"/>
    </source>
</evidence>
<evidence type="ECO:0000250" key="5">
    <source>
        <dbReference type="UniProtKB" id="P17767"/>
    </source>
</evidence>
<evidence type="ECO:0000250" key="6">
    <source>
        <dbReference type="UniProtKB" id="P18247"/>
    </source>
</evidence>
<evidence type="ECO:0000250" key="7">
    <source>
        <dbReference type="UniProtKB" id="P21231"/>
    </source>
</evidence>
<evidence type="ECO:0000250" key="8">
    <source>
        <dbReference type="UniProtKB" id="P89509"/>
    </source>
</evidence>
<evidence type="ECO:0000255" key="9"/>
<evidence type="ECO:0000255" key="10">
    <source>
        <dbReference type="PROSITE-ProRule" id="PRU00539"/>
    </source>
</evidence>
<evidence type="ECO:0000255" key="11">
    <source>
        <dbReference type="PROSITE-ProRule" id="PRU00541"/>
    </source>
</evidence>
<evidence type="ECO:0000255" key="12">
    <source>
        <dbReference type="PROSITE-ProRule" id="PRU00542"/>
    </source>
</evidence>
<evidence type="ECO:0000255" key="13">
    <source>
        <dbReference type="PROSITE-ProRule" id="PRU00766"/>
    </source>
</evidence>
<evidence type="ECO:0000255" key="14">
    <source>
        <dbReference type="PROSITE-ProRule" id="PRU01080"/>
    </source>
</evidence>
<evidence type="ECO:0000255" key="15">
    <source>
        <dbReference type="PROSITE-ProRule" id="PRU01219"/>
    </source>
</evidence>
<evidence type="ECO:0000256" key="16">
    <source>
        <dbReference type="SAM" id="MobiDB-lite"/>
    </source>
</evidence>
<evidence type="ECO:0000305" key="17"/>
<name>POLG_BYMV</name>
<sequence length="3056" mass="347722">MTTINIGTIPVVINQNADTQMGEGTKNIFPIVKDFVDPFADLEMRCAERVKRMGELCFSKKGRYITMIPKPDYIKAREKEQREEELNFQNSEHVLNSLDTTCTPEHHSSRNNGMQVSFKTQHYKRTFRKPRIQAKKRDLKGQHTIHYVAKELLSIVKKRDMVLEVVDKRKHANFATFRRYGKTYGMHITLNHMVRKRRRVDVTLNKLMTEIAMHCAIPFECLNTLTLRKGHSGLVLQTETVPNVHKIKSKITIVRGVVNEGNIPVLIDARKKLSGRDMSTIREFSAGDLFWKGYNQTFIDNRPTDLNHQCTSDLNVTQCGSVMALLTLALFPCGRITCKKCVENFLNQNNKERFNNASVFINQVIQLLEKGFSEFKHSKEILLMFKERLQMENPATDQCMEIAKATAALPEAPFSHIKEINNVLLKYGSLSNEEVGGASKHLLEVVRYIRNRTDSIQRNDLSKFRNKISSKTHINLDLMCDNQLDKNANFVWGQRAYHAKRFLSNYFNEINPSEGYDKFIFRKLPNGARELAIGRLIMPTNFEAFREQMKGKMIDNGPIGKDCVSRMRGSFCYPCCCTTDDVGTAVISDFKMPTKYHLVLGGNDLAKYIKLPTDTTGNMYIAKDGFCHINIFFAMLVNVSEEKSKDFTKMVRDQIMPKLGEWPTMMDVATACWQLTVWFPDTLSAELPRILVDHKLGIMHVLDSYGSISAGYHVLKANIVSQLIKFASDDLESELKYYRVGGDCNFGSRVRIDTKFLLKSIYRPDLLERIIEHEPFVLVLAMQSPAVLLALFNSASLEKAVQYWMHREMQVSHIMTLLAVLASNVSASKLLTTQFEIIEASAPQILAEMDKVHLPMHSIHSANVFLMNMSESRETDKTIDELGFYSFKKSSRILMEKTLMADLEEQWQGLGLLERLSLIKRSWRVRAKYSSFAIQREEPGIRDKFTTSLKLSGAQIKQQLLAQKDQAVHFVERRIEGTKKFVANQSISLIKMCLPRLADIVNILTVIALLNAILAFMLDHIKRFNEARRIAQEKKEKQHLKELNTLYNKYWDNEKPTYLEFKSDVIEKLPHTLATFEKYYFEDDKYTFQAKPNDMVALEKIIAVTALVLMIFDAERSDCVYKVLNKLKGILSTTTQDAYRFQSLDTSKTLLEEKEMTIDFEINEGEVKAFSGTQTTFSEWWDNQLQNGNVITHYRTEGQFMEFTRANAQPVANEIAHNDAHDILVRGAVGSGKSTGLPFYLSNKGKVLMIESTRPLAENVFKQLKSEPFYASPTLRMRGTTSYGASPITIMTSGYALHYYANNPAMMKEYKFVIIDECHVHDANAIAFVSLLKEYSFDGKLIKVSATPPGREVEFTTQYPVTLVTEESLSFEQFVSQQGTGANCDMLDVCDNILVYVASYNEVDQLSKMLLDRGHIVTKVDGRTMKNGKTEIESKGSRSKRHFIVATNIIENGVTLDIEGVVDFGLKVVPELDVDNRLMRYTKQNVSYGERIQRLGRVGRHKAGKALRIGVTEKGLVKPPSVITTEAAFYCFAYGLPVMAEGVTPSLLSKCTVQQARSMMSFELPIMYTVNLVRFDGTMHPSVHNLLKPYKLRDSNVVLNKMAIPHGNVRNWPTVRDFKCMGVRIDAPEDTRVPFHARDIPDKLHKEIFEVCCKYKGDAGFSKLNVVNACKIAYTLQTDPSSIQRTIKILDELIAREQQKREYFQNVANTSCAGSSYSLSNIINAIRARSTSDYTQENLSVLHSARAQLLEFKNINSDFSNLSTLSEFGALECLQFESLQEISKHLQLKGHWNKPVLIQDFLIAAGVLGGGCWMLYQYFKQETSKAFVFQGKNRRTKQKLRFRDARDMKGRMEVYADEGTIVENFGSKYTKKGKVRGTTTGMGTKTRRFTNMYGFDPTEYSFARYLDPITGETLDEQPITNLNLVSEHFQEMRRKYRENEIMESQQFAANPRIEAYFVKDAGQKVLKVDLTPHKPLLYSDKFGNIMGYPEREGELRQTGAAEFIDPKELPEPKESTDFDFESLSKIGGLRDYNPIAANVCLLENESAEYCDEIYGIGYGNVIITNQHLFRHNNGELTIKSKHGTFKCKNTCALKLLPIEGHDLLLIQMPKDFPVFPQKLRFREPTHEDKIVLVSTNFQEKSFSSVVSESSNISRVKQANFFKHWISTVAGQCGNPMVSTKDGFIVGIHSLTAVSGDLNVFTSIPPNFEDEVLKQMSKKSWCCGWKLNMSQIGWDGIKIVDDQPKDPFPVSKMVGLLNDLQLSFQSAKNTKWLLERAHGNIKAVAQASSALVTKHVVKGKCRLFEVYLTTDEEAEKFFRPLMGAYQKSRLNKEAYVKDLMKYATPIEVGLVDTRCFERSFEKVQNMLELKGFSKCNYVTYGPDILSALNMKAAMGALYSGKKKDHFSEISEEKFDNILQASCERLYSGRMGVWNGSLKAELRPQEKVLANKTRSFTAAPIDTLLAGKVCVDDFNNKFYSLHLKIPSTVGITKFYGGWDRLLDSLPDGWVYCDADGSQFDSSLTPYLLNAVLEMRLRLMEEWDLGEQMLKNLYTEIVYTPILTPDGTIVKKFKGNNSGQPSTVVDNTLMVIMAVYYAAEKLGIKGNLEDTLVFFANGDDLLIAIKPECESYLDKFEGLFSELGLKYDFSSRTKNKGDLWFMSHRGIQIDGMWIPKLEEERIVSILEWDRAIQPEHRLEAICAAMIEAWGYPTLLNHIRKFYLWVLGQAPYSQLSAEGKAPYISEVALKHLYTEEKVTPTELERYNIALIDCFESESDEVLTCRFQSDQEQLNAGEEKKDKRKKNEGDPNKDSEGQSVRQIVPDRDVNAGTVGTFSVPRLKKIAGKLNIPKIGGKIVLNLDHLLEYNPPQDDISNVIATQAQFEAWYNGVKQAYEVEDSQMGIILNGLMVWCIENGTSGDLQGEWTMMDGEEQVTYPLKPILDNAKPTFRQIMSHFSEVAEAYIEKRNATERYMPRYGLQRNLTDYGLARYAFDFYKLTSRTPVRAREAHMQMKAAAVRGKSTRLFGLDGNVGTDEENTERHTAGDVNRDMHTMLGVRI</sequence>
<feature type="chain" id="PRO_0000419996" description="Genome polyprotein">
    <location>
        <begin position="1"/>
        <end position="3056"/>
    </location>
</feature>
<feature type="chain" id="PRO_0000040256" description="P1 protease" evidence="9">
    <location>
        <begin position="1"/>
        <end position="284"/>
    </location>
</feature>
<feature type="chain" id="PRO_0000040257" description="Helper component proteinase" evidence="9">
    <location>
        <begin position="285"/>
        <end position="741"/>
    </location>
</feature>
<feature type="chain" id="PRO_0000040258" description="Protein P3" evidence="9">
    <location>
        <begin position="742"/>
        <end position="1089"/>
    </location>
</feature>
<feature type="chain" id="PRO_0000040259" description="6 kDa protein 1" evidence="1">
    <location>
        <begin position="1090"/>
        <end position="1142"/>
    </location>
</feature>
<feature type="chain" id="PRO_0000040260" description="Cytoplasmic inclusion protein" evidence="1">
    <location>
        <begin position="1143"/>
        <end position="1777"/>
    </location>
</feature>
<feature type="chain" id="PRO_0000040261" description="6 kDa protein 2" evidence="1">
    <location>
        <begin position="1778"/>
        <end position="1830"/>
    </location>
</feature>
<feature type="chain" id="PRO_0000040262" description="Viral genome-linked protein" evidence="1">
    <location>
        <begin position="1831"/>
        <end position="2021"/>
    </location>
</feature>
<feature type="chain" id="PRO_0000040263" description="Nuclear inclusion protein A" evidence="1">
    <location>
        <begin position="2022"/>
        <end position="2264"/>
    </location>
</feature>
<feature type="chain" id="PRO_0000040264" description="Nuclear inclusion protein B" evidence="1">
    <location>
        <begin position="2265"/>
        <end position="2783"/>
    </location>
</feature>
<feature type="chain" id="PRO_0000040265" description="Capsid protein" evidence="1">
    <location>
        <begin position="2784"/>
        <end position="3056"/>
    </location>
</feature>
<feature type="domain" description="Peptidase S30" evidence="15">
    <location>
        <begin position="139"/>
        <end position="284"/>
    </location>
</feature>
<feature type="domain" description="Peptidase C6" evidence="14">
    <location>
        <begin position="619"/>
        <end position="741"/>
    </location>
</feature>
<feature type="domain" description="Helicase ATP-binding" evidence="11">
    <location>
        <begin position="1214"/>
        <end position="1366"/>
    </location>
</feature>
<feature type="domain" description="Helicase C-terminal" evidence="12">
    <location>
        <begin position="1385"/>
        <end position="1544"/>
    </location>
</feature>
<feature type="domain" description="Peptidase C4" evidence="13">
    <location>
        <begin position="2022"/>
        <end position="2240"/>
    </location>
</feature>
<feature type="domain" description="RdRp catalytic" evidence="10">
    <location>
        <begin position="2507"/>
        <end position="2630"/>
    </location>
</feature>
<feature type="region of interest" description="Disordered" evidence="16">
    <location>
        <begin position="2788"/>
        <end position="2820"/>
    </location>
</feature>
<feature type="short sequence motif" description="Involved in interaction with stylet and aphid transmission" evidence="1">
    <location>
        <begin position="335"/>
        <end position="338"/>
    </location>
</feature>
<feature type="short sequence motif" description="Involved in virions binding and aphid transmission" evidence="1">
    <location>
        <begin position="593"/>
        <end position="595"/>
    </location>
</feature>
<feature type="short sequence motif" description="DECH box">
    <location>
        <begin position="1316"/>
        <end position="1319"/>
    </location>
</feature>
<feature type="short sequence motif" description="Nuclear localization signal" evidence="9">
    <location>
        <begin position="1871"/>
        <end position="1878"/>
    </location>
</feature>
<feature type="compositionally biased region" description="Basic and acidic residues" evidence="16">
    <location>
        <begin position="2792"/>
        <end position="2811"/>
    </location>
</feature>
<feature type="active site" description="For P1 proteinase activity" evidence="15">
    <location>
        <position position="192"/>
    </location>
</feature>
<feature type="active site" description="For P1 proteinase activity" evidence="15">
    <location>
        <position position="201"/>
    </location>
</feature>
<feature type="active site" description="For P1 proteinase activity" evidence="15">
    <location>
        <position position="232"/>
    </location>
</feature>
<feature type="active site" description="For helper component proteinase activity" evidence="14">
    <location>
        <position position="627"/>
    </location>
</feature>
<feature type="active site" description="For helper component proteinase activity" evidence="14">
    <location>
        <position position="700"/>
    </location>
</feature>
<feature type="active site" description="For nuclear inclusion protein A activity" evidence="13">
    <location>
        <position position="2067"/>
    </location>
</feature>
<feature type="active site" description="For nuclear inclusion protein A activity" evidence="13">
    <location>
        <position position="2102"/>
    </location>
</feature>
<feature type="active site" description="For nuclear inclusion protein A activity" evidence="13">
    <location>
        <position position="2172"/>
    </location>
</feature>
<feature type="binding site" evidence="11">
    <location>
        <begin position="1227"/>
        <end position="1234"/>
    </location>
    <ligand>
        <name>ATP</name>
        <dbReference type="ChEBI" id="CHEBI:30616"/>
    </ligand>
</feature>
<feature type="site" description="Cleavage; by P1 proteinase" evidence="15">
    <location>
        <begin position="284"/>
        <end position="285"/>
    </location>
</feature>
<feature type="site" description="Cleavage; by autolysis" evidence="14">
    <location>
        <begin position="741"/>
        <end position="742"/>
    </location>
</feature>
<feature type="site" description="Cleavage; by NIa-pro" evidence="6">
    <location>
        <begin position="1089"/>
        <end position="1090"/>
    </location>
</feature>
<feature type="site" description="Cleavage; by NIa-pro" evidence="1">
    <location>
        <begin position="1100"/>
        <end position="1101"/>
    </location>
</feature>
<feature type="site" description="Cleavage; by NIa-pro" evidence="6">
    <location>
        <begin position="1142"/>
        <end position="1143"/>
    </location>
</feature>
<feature type="site" description="Cleavage; by NIa-pro" evidence="1">
    <location>
        <begin position="1152"/>
        <end position="1153"/>
    </location>
</feature>
<feature type="site" description="Cleavage; by NIa-pro" evidence="6">
    <location>
        <begin position="1777"/>
        <end position="1778"/>
    </location>
</feature>
<feature type="site" description="Cleavage; by NIa-pro" evidence="1">
    <location>
        <begin position="1787"/>
        <end position="1788"/>
    </location>
</feature>
<feature type="site" description="Cleavage; by NIa-pro" evidence="6">
    <location>
        <begin position="1830"/>
        <end position="1831"/>
    </location>
</feature>
<feature type="site" description="Cleavage; by NIa-pro" evidence="1">
    <location>
        <begin position="1840"/>
        <end position="1841"/>
    </location>
</feature>
<feature type="site" description="Cleavage; by NIa-pro" evidence="6">
    <location>
        <begin position="2021"/>
        <end position="2022"/>
    </location>
</feature>
<feature type="site" description="Cleavage; by NIa-pro" evidence="6">
    <location>
        <begin position="2265"/>
        <end position="2266"/>
    </location>
</feature>
<feature type="site" description="Cleavage; by NIa-pro" evidence="1">
    <location>
        <begin position="2274"/>
        <end position="2275"/>
    </location>
</feature>
<feature type="site" description="Cleavage; by NIa-pro" evidence="6">
    <location>
        <begin position="2783"/>
        <end position="2784"/>
    </location>
</feature>
<feature type="site" description="Cleavage; by NIa-pro" evidence="1">
    <location>
        <begin position="2793"/>
        <end position="2794"/>
    </location>
</feature>
<feature type="modified residue" description="O-(5'-phospho-RNA)-tyrosine" evidence="3">
    <location>
        <position position="1893"/>
    </location>
</feature>
<feature type="modified residue" description="Phosphothreonine" evidence="5">
    <location>
        <position position="3040"/>
    </location>
</feature>
<feature type="sequence variant">
    <original>D</original>
    <variation>G</variation>
    <location>
        <position position="2775"/>
    </location>
</feature>
<feature type="sequence variant">
    <original>D</original>
    <variation>N</variation>
    <location>
        <position position="2805"/>
    </location>
</feature>
<feature type="sequence variant">
    <original>L</original>
    <variation>F</variation>
    <location>
        <position position="2855"/>
    </location>
</feature>
<feature type="sequence variant">
    <original>E</original>
    <variation>K</variation>
    <location>
        <position position="2862"/>
    </location>
</feature>
<feature type="sequence variant">
    <original>Q</original>
    <variation>R</variation>
    <location>
        <position position="2897"/>
    </location>
</feature>
<feature type="sequence variant">
    <original>G</original>
    <variation>E</variation>
    <location>
        <position position="2975"/>
    </location>
</feature>
<feature type="sequence variant">
    <original>K</original>
    <variation>E</variation>
    <location>
        <position position="2994"/>
    </location>
</feature>
<feature type="sequence variant">
    <original>G</original>
    <variation>A</variation>
    <location>
        <position position="3017"/>
    </location>
</feature>
<reference key="1">
    <citation type="journal article" date="2003" name="Arch. Virol.">
        <title>The complete nucleotide sequence of isolate BYMV-GDD of Bean yellow mosaic virus, and comparison to other potyviruses.</title>
        <authorList>
            <person name="Hammond J."/>
            <person name="Hammond R.W."/>
        </authorList>
    </citation>
    <scope>NUCLEOTIDE SEQUENCE [GENOMIC RNA]</scope>
    <source>
        <strain>Isolate GDD</strain>
    </source>
</reference>
<reference key="2">
    <citation type="journal article" date="1989" name="J. Gen. Virol.">
        <title>Molecular cloning, sequencing and expression in Escherichia coli of the bean yellow mosaic virus Capsid protein gene.</title>
        <authorList>
            <person name="Hammond J."/>
            <person name="Hammond R.W."/>
        </authorList>
    </citation>
    <scope>NUCLEOTIDE SEQUENCE [GENOMIC RNA] OF 2775-3056</scope>
</reference>
<reference key="3">
    <citation type="journal article" date="2001" name="Virus Res.">
        <title>Potyvirus proteins: a wealth of functions.</title>
        <authorList>
            <person name="Urcuqui-Inchima S."/>
            <person name="Haenni A.L."/>
            <person name="Bernardi F."/>
        </authorList>
    </citation>
    <scope>REVIEW</scope>
</reference>
<organismHost>
    <name type="scientific">Arachis hypogaea</name>
    <name type="common">Peanut</name>
    <dbReference type="NCBI Taxonomy" id="3818"/>
</organismHost>
<organismHost>
    <name type="scientific">Canna</name>
    <dbReference type="NCBI Taxonomy" id="4627"/>
</organismHost>
<organismHost>
    <name type="scientific">Crotalaria</name>
    <dbReference type="NCBI Taxonomy" id="3828"/>
</organismHost>
<organismHost>
    <name type="scientific">Eustoma</name>
    <dbReference type="NCBI Taxonomy" id="52517"/>
</organismHost>
<organismHost>
    <name type="scientific">Freesia</name>
    <dbReference type="NCBI Taxonomy" id="58987"/>
</organismHost>
<organismHost>
    <name type="scientific">Gladiolus</name>
    <dbReference type="NCBI Taxonomy" id="49747"/>
</organismHost>
<organismHost>
    <name type="scientific">Glycine max</name>
    <name type="common">Soybean</name>
    <name type="synonym">Glycine hispida</name>
    <dbReference type="NCBI Taxonomy" id="3847"/>
</organismHost>
<organismHost>
    <name type="scientific">Lupinus luteus</name>
    <name type="common">European yellow lupine</name>
    <dbReference type="NCBI Taxonomy" id="3873"/>
</organismHost>
<organismHost>
    <name type="scientific">Medicago sativa</name>
    <name type="common">Alfalfa</name>
    <dbReference type="NCBI Taxonomy" id="3879"/>
</organismHost>
<organismHost>
    <name type="scientific">Papaver somniferum</name>
    <name type="common">Opium poppy</name>
    <dbReference type="NCBI Taxonomy" id="3469"/>
</organismHost>
<organismHost>
    <name type="scientific">Phaseolus vulgaris</name>
    <name type="common">Kidney bean</name>
    <name type="synonym">French bean</name>
    <dbReference type="NCBI Taxonomy" id="3885"/>
</organismHost>
<organismHost>
    <name type="scientific">Pisum sativum</name>
    <name type="common">Garden pea</name>
    <name type="synonym">Lathyrus oleraceus</name>
    <dbReference type="NCBI Taxonomy" id="3888"/>
</organismHost>
<organismHost>
    <name type="scientific">Robinia pseudoacacia</name>
    <name type="common">Black locust</name>
    <dbReference type="NCBI Taxonomy" id="35938"/>
</organismHost>
<organismHost>
    <name type="scientific">Trifolium hybridum</name>
    <name type="common">Alsike clover</name>
    <dbReference type="NCBI Taxonomy" id="74517"/>
</organismHost>
<organismHost>
    <name type="scientific">Trifolium incarnatum</name>
    <name type="common">Crimson clover</name>
    <dbReference type="NCBI Taxonomy" id="60916"/>
</organismHost>
<organismHost>
    <name type="scientific">Trifolium pratense</name>
    <name type="common">Red clover</name>
    <dbReference type="NCBI Taxonomy" id="57577"/>
</organismHost>
<organismHost>
    <name type="scientific">Trifolium repens</name>
    <name type="common">Creeping white clover</name>
    <dbReference type="NCBI Taxonomy" id="3899"/>
</organismHost>
<organismHost>
    <name type="scientific">Trifolium subterraneum</name>
    <name type="common">Subterranean clover</name>
    <dbReference type="NCBI Taxonomy" id="3900"/>
</organismHost>
<organismHost>
    <name type="scientific">Trifolium vesiculosum</name>
    <dbReference type="NCBI Taxonomy" id="97047"/>
</organismHost>
<organismHost>
    <name type="scientific">Trigonella foenum-graecum</name>
    <name type="common">Fenugreek</name>
    <dbReference type="NCBI Taxonomy" id="78534"/>
</organismHost>
<organismHost>
    <name type="scientific">Vicia faba</name>
    <name type="common">Broad bean</name>
    <name type="synonym">Faba vulgaris</name>
    <dbReference type="NCBI Taxonomy" id="3906"/>
</organismHost>
<organismHost>
    <name type="scientific">Vicia sativa</name>
    <name type="common">Spring vetch</name>
    <name type="synonym">Tare</name>
    <dbReference type="NCBI Taxonomy" id="3908"/>
</organismHost>
<organism>
    <name type="scientific">Bean yellow mosaic virus</name>
    <dbReference type="NCBI Taxonomy" id="12197"/>
    <lineage>
        <taxon>Viruses</taxon>
        <taxon>Riboviria</taxon>
        <taxon>Orthornavirae</taxon>
        <taxon>Pisuviricota</taxon>
        <taxon>Stelpaviricetes</taxon>
        <taxon>Patatavirales</taxon>
        <taxon>Potyviridae</taxon>
        <taxon>Potyvirus</taxon>
        <taxon>Potyvirus phaseoluteum</taxon>
    </lineage>
</organism>
<comment type="function">
    <molecule>Helper component proteinase</molecule>
    <text evidence="2">Required for aphid transmission and also has proteolytic activity. Only cleaves a Gly-Gly dipeptide at its own C-terminus. Interacts with virions and aphid stylets. Acts as a suppressor of RNA-mediated gene silencing, also known as post-transcriptional gene silencing (PTGS), a mechanism of plant viral defense that limits the accumulation of viral RNAs. May have RNA-binding activity.</text>
</comment>
<comment type="function">
    <molecule>Cytoplasmic inclusion protein</molecule>
    <text>Has helicase activity. It may be involved in replication.</text>
</comment>
<comment type="function">
    <molecule>6 kDa protein 1</molecule>
    <text evidence="4 8">Indispensable for virus replication (By similarity). Reduces the abundance of host transcripts related to jasmonic acid biosynthesis therefore altering the host defenses (By similarity). In order to increase its own stability, decreases host protein degradation pathways (By similarity).</text>
</comment>
<comment type="function">
    <molecule>6 kDa protein 2</molecule>
    <text evidence="3">Indispensable for virus replication.</text>
</comment>
<comment type="function">
    <molecule>Viral genome-linked protein</molecule>
    <text evidence="6">Mediates the cap-independent, EIF4E-dependent translation of viral genomic RNAs (By similarity). Binds to the cap-binding site of host EIF4E and thus interferes with the host EIF4E-dependent mRNA export and translation (By similarity). VPg-RNA directly binds EIF4E and is a template for transcription (By similarity). Also forms trimeric complexes with EIF4E-EIF4G, which are templates for translation (By similarity).</text>
</comment>
<comment type="function">
    <molecule>Nuclear inclusion protein A</molecule>
    <text evidence="2">Has RNA-binding and proteolytic activities.</text>
</comment>
<comment type="function">
    <molecule>Nuclear inclusion protein B</molecule>
    <text>An RNA-dependent RNA polymerase that plays an essential role in the virus replication.</text>
</comment>
<comment type="function">
    <molecule>Capsid protein</molecule>
    <text evidence="2">Involved in aphid transmission, cell-to-cell and systemis movement, encapsidation of the viral RNA and in the regulation of viral RNA amplification.</text>
</comment>
<comment type="catalytic activity">
    <molecule>Nuclear inclusion protein B</molecule>
    <reaction evidence="10">
        <text>RNA(n) + a ribonucleoside 5'-triphosphate = RNA(n+1) + diphosphate</text>
        <dbReference type="Rhea" id="RHEA:21248"/>
        <dbReference type="Rhea" id="RHEA-COMP:14527"/>
        <dbReference type="Rhea" id="RHEA-COMP:17342"/>
        <dbReference type="ChEBI" id="CHEBI:33019"/>
        <dbReference type="ChEBI" id="CHEBI:61557"/>
        <dbReference type="ChEBI" id="CHEBI:140395"/>
        <dbReference type="EC" id="2.7.7.48"/>
    </reaction>
</comment>
<comment type="catalytic activity">
    <molecule>Nuclear inclusion protein A</molecule>
    <reaction evidence="2">
        <text>Hydrolyzes glutaminyl bonds, and activity is further restricted by preferences for the amino acids in P6 - P1' that vary with the species of potyvirus, e.g. Glu-Xaa-Xaa-Tyr-Xaa-Gln-|-(Ser or Gly) for the enzyme from tobacco etch virus. The natural substrate is the viral polyprotein, but other proteins and oligopeptides containing the appropriate consensus sequence are also cleaved.</text>
        <dbReference type="EC" id="3.4.22.44"/>
    </reaction>
</comment>
<comment type="catalytic activity">
    <molecule>Helper component proteinase</molecule>
    <reaction evidence="2">
        <text>Hydrolyzes a Gly-|-Gly bond at its own C-terminus, commonly in the sequence -Tyr-Xaa-Val-Gly-|-Gly, in the processing of the potyviral polyprotein.</text>
        <dbReference type="EC" id="3.4.22.45"/>
    </reaction>
</comment>
<comment type="subunit">
    <molecule>Viral genome-linked protein</molecule>
    <text evidence="6">Interacts with host eIF4E protein (via cap-binding region); this interaction mediates the translation of the VPg-viral RNA conjugates (By similarity). Part of a complex that comprises VPg, RNA, host EIF4E and EIF4G; this interaction mediates the translation of the VPg-viral RNA conjugates (By similarity).</text>
</comment>
<comment type="subcellular location">
    <molecule>6 kDa protein 1</molecule>
    <subcellularLocation>
        <location>Host cytoplasmic vesicle</location>
    </subcellularLocation>
    <text evidence="4">Probably colocalizes with 6K2-induced vesicles associated with host chloroplasts.</text>
</comment>
<comment type="subcellular location">
    <molecule>6 kDa protein 2</molecule>
    <subcellularLocation>
        <location evidence="3">Host cytoplasmic vesicle</location>
    </subcellularLocation>
    <text evidence="3">6K-induced vesicles associate with host chloroplasts.</text>
</comment>
<comment type="subcellular location">
    <molecule>Viral genome-linked protein</molecule>
    <subcellularLocation>
        <location evidence="7">Host nucleus</location>
    </subcellularLocation>
    <text evidence="7">Binds to host plant eIF4E proteins in the host nucleus.</text>
</comment>
<comment type="subcellular location">
    <molecule>Capsid protein</molecule>
    <subcellularLocation>
        <location evidence="17">Virion</location>
    </subcellularLocation>
</comment>
<comment type="alternative products">
    <event type="ribosomal frameshifting"/>
    <isoform>
        <id>P17765-1</id>
        <name>Genome polyprotein</name>
        <sequence type="displayed"/>
    </isoform>
    <isoform>
        <id>P0CJ95-1</id>
        <name>P3N-PIPO polyprotein</name>
        <sequence type="external"/>
    </isoform>
</comment>
<comment type="domain">
    <molecule>Helper component proteinase</molecule>
    <text>The N-terminus is involved in interaction with stylets. The central part is involved in interaction with virions and the C-terminus is involved in cell-to cell movement of the virus.</text>
</comment>
<comment type="PTM">
    <molecule>Viral genome-linked protein</molecule>
    <text evidence="3">VPg is uridylylated by the polymerase and is covalently attached to the 5'-end of the genomic RNA. This uridylylated form acts as a nucleotide-peptide primer for the polymerase (By similarity).</text>
</comment>
<comment type="PTM">
    <molecule>Genome polyprotein</molecule>
    <text evidence="1">Potyviral RNA is expressed as two polyproteins which undergo post-translational proteolytic processing. Genome polyprotein is processed by NIa-pro, P1 and HC-pro proteinases resulting in the production of at least ten individual proteins. P3N-PIPO polyprotein is cleaved by P1 and HC-pro proteinases resulting in the production of three individual proteins. The P1 proteinase and the HC-pro cleave only their respective C-termini autocatalytically. 6K1 is essential for proper proteolytic separation of P3 from CI (By similarity).</text>
</comment>
<comment type="miscellaneous">
    <molecule>Isoform Genome polyprotein</molecule>
    <text>Produced by conventional translation.</text>
</comment>
<comment type="similarity">
    <text evidence="17">Belongs to the potyviridae genome polyprotein family.</text>
</comment>
<accession>P17765</accession>
<accession>Q65887</accession>
<accession>Q6Y1D8</accession>